<gene>
    <name evidence="1" type="primary">EEF1AKMT4</name>
</gene>
<feature type="chain" id="PRO_0000443292" description="EEF1A lysine methyltransferase 4">
    <location>
        <begin position="1"/>
        <end position="255"/>
    </location>
</feature>
<feature type="short sequence motif" description="Required for methyltransferase activity" evidence="1">
    <location>
        <begin position="129"/>
        <end position="134"/>
    </location>
</feature>
<feature type="binding site" evidence="1">
    <location>
        <position position="26"/>
    </location>
    <ligand>
        <name>S-adenosyl-L-methionine</name>
        <dbReference type="ChEBI" id="CHEBI:59789"/>
    </ligand>
</feature>
<feature type="binding site" evidence="1">
    <location>
        <position position="30"/>
    </location>
    <ligand>
        <name>S-adenosyl-L-methionine</name>
        <dbReference type="ChEBI" id="CHEBI:59789"/>
    </ligand>
</feature>
<feature type="binding site" evidence="1">
    <location>
        <position position="41"/>
    </location>
    <ligand>
        <name>S-adenosyl-L-methionine</name>
        <dbReference type="ChEBI" id="CHEBI:59789"/>
    </ligand>
</feature>
<feature type="binding site" evidence="1">
    <location>
        <position position="66"/>
    </location>
    <ligand>
        <name>S-adenosyl-L-methionine</name>
        <dbReference type="ChEBI" id="CHEBI:59789"/>
    </ligand>
</feature>
<feature type="binding site" evidence="1">
    <location>
        <begin position="88"/>
        <end position="89"/>
    </location>
    <ligand>
        <name>S-adenosyl-L-methionine</name>
        <dbReference type="ChEBI" id="CHEBI:59789"/>
    </ligand>
</feature>
<feature type="binding site" evidence="1">
    <location>
        <begin position="113"/>
        <end position="114"/>
    </location>
    <ligand>
        <name>S-adenosyl-L-methionine</name>
        <dbReference type="ChEBI" id="CHEBI:59789"/>
    </ligand>
</feature>
<feature type="binding site" evidence="1">
    <location>
        <position position="130"/>
    </location>
    <ligand>
        <name>S-adenosyl-L-methionine</name>
        <dbReference type="ChEBI" id="CHEBI:59789"/>
    </ligand>
</feature>
<feature type="modified residue" description="Phosphotyrosine" evidence="1">
    <location>
        <position position="39"/>
    </location>
</feature>
<feature type="sequence conflict" description="In Ref. 2; AAI42118." ref="2">
    <original>I</original>
    <variation>L</variation>
    <location>
        <position position="76"/>
    </location>
</feature>
<protein>
    <recommendedName>
        <fullName evidence="1">EEF1A lysine methyltransferase 4</fullName>
        <ecNumber evidence="1">2.1.1.-</ecNumber>
    </recommendedName>
</protein>
<accession>P0DPE1</accession>
<accession>A5PJH8</accession>
<accession>G3N1Q4</accession>
<accession>Q10711</accession>
<accession>Q547G8</accession>
<accession>Q865C4</accession>
<dbReference type="EC" id="2.1.1.-" evidence="1"/>
<dbReference type="EMBL" id="DAAA02001884">
    <property type="status" value="NOT_ANNOTATED_CDS"/>
    <property type="molecule type" value="Genomic_DNA"/>
</dbReference>
<dbReference type="EMBL" id="BC142117">
    <property type="protein sequence ID" value="AAI42118.1"/>
    <property type="molecule type" value="mRNA"/>
</dbReference>
<dbReference type="RefSeq" id="NP_001300993.1">
    <molecule id="P0DPE1-1"/>
    <property type="nucleotide sequence ID" value="NM_001314064.1"/>
</dbReference>
<dbReference type="SMR" id="P0DPE1"/>
<dbReference type="FunCoup" id="P0DPE1">
    <property type="interactions" value="397"/>
</dbReference>
<dbReference type="STRING" id="9913.ENSBTAP00000055807"/>
<dbReference type="Ensembl" id="ENSBTAT00000064633.3">
    <molecule id="P0DPE1-1"/>
    <property type="protein sequence ID" value="ENSBTAP00000055807.1"/>
    <property type="gene ID" value="ENSBTAG00000051586.2"/>
</dbReference>
<dbReference type="GeneID" id="281134"/>
<dbReference type="KEGG" id="bta:281134"/>
<dbReference type="CTD" id="9718"/>
<dbReference type="VEuPathDB" id="HostDB:ENSBTAG00000051586"/>
<dbReference type="GeneTree" id="ENSGT00940000164140"/>
<dbReference type="InParanoid" id="P0DPE1"/>
<dbReference type="OMA" id="HWAVMDA"/>
<dbReference type="OrthoDB" id="411785at2759"/>
<dbReference type="Proteomes" id="UP000009136">
    <property type="component" value="Chromosome 1"/>
</dbReference>
<dbReference type="Bgee" id="ENSBTAG00000051586">
    <property type="expression patterns" value="Expressed in rumen papilla and 104 other cell types or tissues"/>
</dbReference>
<dbReference type="GO" id="GO:0008168">
    <property type="term" value="F:methyltransferase activity"/>
    <property type="evidence" value="ECO:0000250"/>
    <property type="project" value="UniProtKB"/>
</dbReference>
<dbReference type="GO" id="GO:0016279">
    <property type="term" value="F:protein-lysine N-methyltransferase activity"/>
    <property type="evidence" value="ECO:0000250"/>
    <property type="project" value="UniProtKB"/>
</dbReference>
<dbReference type="GO" id="GO:0032259">
    <property type="term" value="P:methylation"/>
    <property type="evidence" value="ECO:0007669"/>
    <property type="project" value="UniProtKB-KW"/>
</dbReference>
<dbReference type="CDD" id="cd02440">
    <property type="entry name" value="AdoMet_MTases"/>
    <property type="match status" value="1"/>
</dbReference>
<dbReference type="FunFam" id="3.40.50.150:FF:000111">
    <property type="entry name" value="EEF1A lysine methyltransferase 4"/>
    <property type="match status" value="1"/>
</dbReference>
<dbReference type="Gene3D" id="3.40.50.150">
    <property type="entry name" value="Vaccinia Virus protein VP39"/>
    <property type="match status" value="1"/>
</dbReference>
<dbReference type="InterPro" id="IPR051419">
    <property type="entry name" value="Lys/N-term_MeTrsfase_sf"/>
</dbReference>
<dbReference type="InterPro" id="IPR013216">
    <property type="entry name" value="Methyltransf_11"/>
</dbReference>
<dbReference type="InterPro" id="IPR029063">
    <property type="entry name" value="SAM-dependent_MTases_sf"/>
</dbReference>
<dbReference type="PANTHER" id="PTHR12176:SF80">
    <property type="entry name" value="EEF1A LYSINE METHYLTRANSFERASE 4"/>
    <property type="match status" value="1"/>
</dbReference>
<dbReference type="PANTHER" id="PTHR12176">
    <property type="entry name" value="SAM-DEPENDENT METHYLTRANSFERASE SUPERFAMILY PROTEIN"/>
    <property type="match status" value="1"/>
</dbReference>
<dbReference type="Pfam" id="PF08241">
    <property type="entry name" value="Methyltransf_11"/>
    <property type="match status" value="1"/>
</dbReference>
<dbReference type="SUPFAM" id="SSF53335">
    <property type="entry name" value="S-adenosyl-L-methionine-dependent methyltransferases"/>
    <property type="match status" value="1"/>
</dbReference>
<name>EFMT4_BOVIN</name>
<evidence type="ECO:0000250" key="1">
    <source>
        <dbReference type="UniProtKB" id="P0DPD7"/>
    </source>
</evidence>
<evidence type="ECO:0000305" key="2"/>
<comment type="function">
    <text evidence="1">Protein-lysine methyltransferase that efficiently catalyzes three successive methylations on 'Lys-36' in eukaryotic translation elongation factor 1 alpha (EEF1A1 or EEF1A2).</text>
</comment>
<comment type="catalytic activity">
    <reaction evidence="1">
        <text>L-lysyl-[protein] + S-adenosyl-L-methionine = N(6)-methyl-L-lysyl-[protein] + S-adenosyl-L-homocysteine + H(+)</text>
        <dbReference type="Rhea" id="RHEA:51736"/>
        <dbReference type="Rhea" id="RHEA-COMP:9752"/>
        <dbReference type="Rhea" id="RHEA-COMP:13053"/>
        <dbReference type="ChEBI" id="CHEBI:15378"/>
        <dbReference type="ChEBI" id="CHEBI:29969"/>
        <dbReference type="ChEBI" id="CHEBI:57856"/>
        <dbReference type="ChEBI" id="CHEBI:59789"/>
        <dbReference type="ChEBI" id="CHEBI:61929"/>
    </reaction>
</comment>
<comment type="catalytic activity">
    <reaction evidence="1">
        <text>N(6)-methyl-L-lysyl-[protein] + S-adenosyl-L-methionine = N(6),N(6)-dimethyl-L-lysyl-[protein] + S-adenosyl-L-homocysteine + H(+)</text>
        <dbReference type="Rhea" id="RHEA:54196"/>
        <dbReference type="Rhea" id="RHEA-COMP:13053"/>
        <dbReference type="Rhea" id="RHEA-COMP:13827"/>
        <dbReference type="ChEBI" id="CHEBI:15378"/>
        <dbReference type="ChEBI" id="CHEBI:57856"/>
        <dbReference type="ChEBI" id="CHEBI:59789"/>
        <dbReference type="ChEBI" id="CHEBI:61929"/>
        <dbReference type="ChEBI" id="CHEBI:61976"/>
    </reaction>
</comment>
<comment type="catalytic activity">
    <reaction evidence="1">
        <text>N(6),N(6)-dimethyl-L-lysyl-[protein] + S-adenosyl-L-methionine = N(6),N(6),N(6)-trimethyl-L-lysyl-[protein] + S-adenosyl-L-homocysteine + H(+)</text>
        <dbReference type="Rhea" id="RHEA:54200"/>
        <dbReference type="Rhea" id="RHEA-COMP:13826"/>
        <dbReference type="Rhea" id="RHEA-COMP:13827"/>
        <dbReference type="ChEBI" id="CHEBI:15378"/>
        <dbReference type="ChEBI" id="CHEBI:57856"/>
        <dbReference type="ChEBI" id="CHEBI:59789"/>
        <dbReference type="ChEBI" id="CHEBI:61961"/>
        <dbReference type="ChEBI" id="CHEBI:61976"/>
    </reaction>
</comment>
<comment type="alternative products">
    <event type="alternative splicing"/>
    <isoform>
        <id>P0DPE1-1</id>
        <id>Q10711-5</id>
        <name>EEF1AKMT4-1</name>
        <sequence type="displayed"/>
    </isoform>
    <isoform>
        <id>P0DPE2-1</id>
        <id>Q10711-1</id>
        <name>EEF1AKMT4-ECE2-1</name>
        <name>ECE-2a-1</name>
        <sequence type="external"/>
    </isoform>
    <isoform>
        <id>P0DPE2-2</id>
        <id>Q10711-2</id>
        <name>EEF1AKMT4-ECE2-2</name>
        <name>ECE-2a-2</name>
        <sequence type="external"/>
    </isoform>
</comment>
<comment type="similarity">
    <text evidence="2">Belongs to the methyltransferase superfamily.</text>
</comment>
<keyword id="KW-0025">Alternative splicing</keyword>
<keyword id="KW-0489">Methyltransferase</keyword>
<keyword id="KW-0597">Phosphoprotein</keyword>
<keyword id="KW-1185">Reference proteome</keyword>
<keyword id="KW-0949">S-adenosyl-L-methionine</keyword>
<keyword id="KW-0808">Transferase</keyword>
<proteinExistence type="evidence at transcript level"/>
<organism>
    <name type="scientific">Bos taurus</name>
    <name type="common">Bovine</name>
    <dbReference type="NCBI Taxonomy" id="9913"/>
    <lineage>
        <taxon>Eukaryota</taxon>
        <taxon>Metazoa</taxon>
        <taxon>Chordata</taxon>
        <taxon>Craniata</taxon>
        <taxon>Vertebrata</taxon>
        <taxon>Euteleostomi</taxon>
        <taxon>Mammalia</taxon>
        <taxon>Eutheria</taxon>
        <taxon>Laurasiatheria</taxon>
        <taxon>Artiodactyla</taxon>
        <taxon>Ruminantia</taxon>
        <taxon>Pecora</taxon>
        <taxon>Bovidae</taxon>
        <taxon>Bovinae</taxon>
        <taxon>Bos</taxon>
    </lineage>
</organism>
<sequence>MACLGPSAQVPELPEKNCGYREVQYWDQRYQGAADSAPYEWFGDFSCFRDLLEPELRPLDRILVLGCGNSALSYEIFLGGFPDVTSVDYSSVVVAAMRARYAHVPTLRWETMDVRALGFPSGSFDVVLEKGTLDALLTGEQDPWTVSSEGVHTVDQVLNEVSRVLVPAGRFISLTSAAPHFRTRHYAQAHYGWSLRHATYGNGFQFHFYLMQKGKELSVAQLAVGAQILSPPRPPTPSCFLQDSDHEDFLSAIQL</sequence>
<reference key="1">
    <citation type="journal article" date="2009" name="Genome Biol.">
        <title>A whole-genome assembly of the domestic cow, Bos taurus.</title>
        <authorList>
            <person name="Zimin A.V."/>
            <person name="Delcher A.L."/>
            <person name="Florea L."/>
            <person name="Kelley D.R."/>
            <person name="Schatz M.C."/>
            <person name="Puiu D."/>
            <person name="Hanrahan F."/>
            <person name="Pertea G."/>
            <person name="Van Tassell C.P."/>
            <person name="Sonstegard T.S."/>
            <person name="Marcais G."/>
            <person name="Roberts M."/>
            <person name="Subramanian P."/>
            <person name="Yorke J.A."/>
            <person name="Salzberg S.L."/>
        </authorList>
    </citation>
    <scope>NUCLEOTIDE SEQUENCE [LARGE SCALE GENOMIC DNA]</scope>
    <source>
        <strain>Hereford</strain>
    </source>
</reference>
<reference key="2">
    <citation type="submission" date="2007-06" db="EMBL/GenBank/DDBJ databases">
        <authorList>
            <consortium name="NIH - Mammalian Gene Collection (MGC) project"/>
        </authorList>
    </citation>
    <scope>NUCLEOTIDE SEQUENCE [LARGE SCALE MRNA]</scope>
    <source>
        <strain>Hereford</strain>
        <tissue>Thymus</tissue>
    </source>
</reference>